<name>TRUA_AERHH</name>
<sequence>MRIALGIEYDGSRYFGWQRQREVISVQEELEKALSRIANHPVSIQCAGRTDAGVHATGQVIHFDTDANRAEGAWTLGLNSNLPPDIAVRWVKQVDEGFHARFSATARRYRYVIYNHNYRPAILGSGVSHYHETIDADLMHQAGQSLLGEHDFSTFRAVACQSNTPWRNVTHLCVSRSGPYIVLDIKANAFLHHMVRNITGSLLLVGQGLQPVEWIAEVLAARDRNLAGPTAKAGGLYLVDVDYPAELGLPQMPLGPLWLPDSAPGTTSF</sequence>
<organism>
    <name type="scientific">Aeromonas hydrophila subsp. hydrophila (strain ATCC 7966 / DSM 30187 / BCRC 13018 / CCUG 14551 / JCM 1027 / KCTC 2358 / NCIMB 9240 / NCTC 8049)</name>
    <dbReference type="NCBI Taxonomy" id="380703"/>
    <lineage>
        <taxon>Bacteria</taxon>
        <taxon>Pseudomonadati</taxon>
        <taxon>Pseudomonadota</taxon>
        <taxon>Gammaproteobacteria</taxon>
        <taxon>Aeromonadales</taxon>
        <taxon>Aeromonadaceae</taxon>
        <taxon>Aeromonas</taxon>
    </lineage>
</organism>
<dbReference type="EC" id="5.4.99.12" evidence="1"/>
<dbReference type="EMBL" id="CP000462">
    <property type="protein sequence ID" value="ABK38209.1"/>
    <property type="molecule type" value="Genomic_DNA"/>
</dbReference>
<dbReference type="RefSeq" id="WP_011706494.1">
    <property type="nucleotide sequence ID" value="NC_008570.1"/>
</dbReference>
<dbReference type="RefSeq" id="YP_857188.1">
    <property type="nucleotide sequence ID" value="NC_008570.1"/>
</dbReference>
<dbReference type="SMR" id="A0KLN7"/>
<dbReference type="STRING" id="380703.AHA_2680"/>
<dbReference type="EnsemblBacteria" id="ABK38209">
    <property type="protein sequence ID" value="ABK38209"/>
    <property type="gene ID" value="AHA_2680"/>
</dbReference>
<dbReference type="GeneID" id="4490657"/>
<dbReference type="KEGG" id="aha:AHA_2680"/>
<dbReference type="PATRIC" id="fig|380703.7.peg.2685"/>
<dbReference type="eggNOG" id="COG0101">
    <property type="taxonomic scope" value="Bacteria"/>
</dbReference>
<dbReference type="HOGENOM" id="CLU_014673_0_2_6"/>
<dbReference type="OrthoDB" id="9811823at2"/>
<dbReference type="Proteomes" id="UP000000756">
    <property type="component" value="Chromosome"/>
</dbReference>
<dbReference type="GO" id="GO:0003723">
    <property type="term" value="F:RNA binding"/>
    <property type="evidence" value="ECO:0007669"/>
    <property type="project" value="InterPro"/>
</dbReference>
<dbReference type="GO" id="GO:0160147">
    <property type="term" value="F:tRNA pseudouridine(38-40) synthase activity"/>
    <property type="evidence" value="ECO:0007669"/>
    <property type="project" value="UniProtKB-EC"/>
</dbReference>
<dbReference type="GO" id="GO:0031119">
    <property type="term" value="P:tRNA pseudouridine synthesis"/>
    <property type="evidence" value="ECO:0007669"/>
    <property type="project" value="UniProtKB-UniRule"/>
</dbReference>
<dbReference type="CDD" id="cd02570">
    <property type="entry name" value="PseudoU_synth_EcTruA"/>
    <property type="match status" value="1"/>
</dbReference>
<dbReference type="FunFam" id="3.30.70.580:FF:000001">
    <property type="entry name" value="tRNA pseudouridine synthase A"/>
    <property type="match status" value="1"/>
</dbReference>
<dbReference type="FunFam" id="3.30.70.660:FF:000001">
    <property type="entry name" value="tRNA pseudouridine synthase A"/>
    <property type="match status" value="1"/>
</dbReference>
<dbReference type="Gene3D" id="3.30.70.660">
    <property type="entry name" value="Pseudouridine synthase I, catalytic domain, C-terminal subdomain"/>
    <property type="match status" value="1"/>
</dbReference>
<dbReference type="Gene3D" id="3.30.70.580">
    <property type="entry name" value="Pseudouridine synthase I, catalytic domain, N-terminal subdomain"/>
    <property type="match status" value="1"/>
</dbReference>
<dbReference type="HAMAP" id="MF_00171">
    <property type="entry name" value="TruA"/>
    <property type="match status" value="1"/>
</dbReference>
<dbReference type="InterPro" id="IPR020103">
    <property type="entry name" value="PsdUridine_synth_cat_dom_sf"/>
</dbReference>
<dbReference type="InterPro" id="IPR001406">
    <property type="entry name" value="PsdUridine_synth_TruA"/>
</dbReference>
<dbReference type="InterPro" id="IPR020097">
    <property type="entry name" value="PsdUridine_synth_TruA_a/b_dom"/>
</dbReference>
<dbReference type="InterPro" id="IPR020095">
    <property type="entry name" value="PsdUridine_synth_TruA_C"/>
</dbReference>
<dbReference type="InterPro" id="IPR020094">
    <property type="entry name" value="TruA/RsuA/RluB/E/F_N"/>
</dbReference>
<dbReference type="NCBIfam" id="TIGR00071">
    <property type="entry name" value="hisT_truA"/>
    <property type="match status" value="1"/>
</dbReference>
<dbReference type="PANTHER" id="PTHR11142">
    <property type="entry name" value="PSEUDOURIDYLATE SYNTHASE"/>
    <property type="match status" value="1"/>
</dbReference>
<dbReference type="PANTHER" id="PTHR11142:SF0">
    <property type="entry name" value="TRNA PSEUDOURIDINE SYNTHASE-LIKE 1"/>
    <property type="match status" value="1"/>
</dbReference>
<dbReference type="Pfam" id="PF01416">
    <property type="entry name" value="PseudoU_synth_1"/>
    <property type="match status" value="2"/>
</dbReference>
<dbReference type="PIRSF" id="PIRSF001430">
    <property type="entry name" value="tRNA_psdUrid_synth"/>
    <property type="match status" value="1"/>
</dbReference>
<dbReference type="SUPFAM" id="SSF55120">
    <property type="entry name" value="Pseudouridine synthase"/>
    <property type="match status" value="1"/>
</dbReference>
<accession>A0KLN7</accession>
<protein>
    <recommendedName>
        <fullName evidence="1">tRNA pseudouridine synthase A</fullName>
        <ecNumber evidence="1">5.4.99.12</ecNumber>
    </recommendedName>
    <alternativeName>
        <fullName evidence="1">tRNA pseudouridine(38-40) synthase</fullName>
    </alternativeName>
    <alternativeName>
        <fullName evidence="1">tRNA pseudouridylate synthase I</fullName>
    </alternativeName>
    <alternativeName>
        <fullName evidence="1">tRNA-uridine isomerase I</fullName>
    </alternativeName>
</protein>
<feature type="chain" id="PRO_1000017035" description="tRNA pseudouridine synthase A">
    <location>
        <begin position="1"/>
        <end position="269"/>
    </location>
</feature>
<feature type="active site" description="Nucleophile" evidence="1">
    <location>
        <position position="51"/>
    </location>
</feature>
<feature type="binding site" evidence="1">
    <location>
        <position position="109"/>
    </location>
    <ligand>
        <name>substrate</name>
    </ligand>
</feature>
<keyword id="KW-0413">Isomerase</keyword>
<keyword id="KW-1185">Reference proteome</keyword>
<keyword id="KW-0819">tRNA processing</keyword>
<evidence type="ECO:0000255" key="1">
    <source>
        <dbReference type="HAMAP-Rule" id="MF_00171"/>
    </source>
</evidence>
<gene>
    <name evidence="1" type="primary">truA</name>
    <name type="ordered locus">AHA_2680</name>
</gene>
<comment type="function">
    <text evidence="1">Formation of pseudouridine at positions 38, 39 and 40 in the anticodon stem and loop of transfer RNAs.</text>
</comment>
<comment type="catalytic activity">
    <reaction evidence="1">
        <text>uridine(38/39/40) in tRNA = pseudouridine(38/39/40) in tRNA</text>
        <dbReference type="Rhea" id="RHEA:22376"/>
        <dbReference type="Rhea" id="RHEA-COMP:10085"/>
        <dbReference type="Rhea" id="RHEA-COMP:10087"/>
        <dbReference type="ChEBI" id="CHEBI:65314"/>
        <dbReference type="ChEBI" id="CHEBI:65315"/>
        <dbReference type="EC" id="5.4.99.12"/>
    </reaction>
</comment>
<comment type="subunit">
    <text evidence="1">Homodimer.</text>
</comment>
<comment type="similarity">
    <text evidence="1">Belongs to the tRNA pseudouridine synthase TruA family.</text>
</comment>
<reference key="1">
    <citation type="journal article" date="2006" name="J. Bacteriol.">
        <title>Genome sequence of Aeromonas hydrophila ATCC 7966T: jack of all trades.</title>
        <authorList>
            <person name="Seshadri R."/>
            <person name="Joseph S.W."/>
            <person name="Chopra A.K."/>
            <person name="Sha J."/>
            <person name="Shaw J."/>
            <person name="Graf J."/>
            <person name="Haft D.H."/>
            <person name="Wu M."/>
            <person name="Ren Q."/>
            <person name="Rosovitz M.J."/>
            <person name="Madupu R."/>
            <person name="Tallon L."/>
            <person name="Kim M."/>
            <person name="Jin S."/>
            <person name="Vuong H."/>
            <person name="Stine O.C."/>
            <person name="Ali A."/>
            <person name="Horneman A.J."/>
            <person name="Heidelberg J.F."/>
        </authorList>
    </citation>
    <scope>NUCLEOTIDE SEQUENCE [LARGE SCALE GENOMIC DNA]</scope>
    <source>
        <strain>ATCC 7966 / DSM 30187 / BCRC 13018 / CCUG 14551 / JCM 1027 / KCTC 2358 / NCIMB 9240 / NCTC 8049</strain>
    </source>
</reference>
<proteinExistence type="inferred from homology"/>